<keyword id="KW-0413">Isomerase</keyword>
<keyword id="KW-0423">Lactose metabolism</keyword>
<name>LACA_STAAS</name>
<evidence type="ECO:0000255" key="1">
    <source>
        <dbReference type="HAMAP-Rule" id="MF_01555"/>
    </source>
</evidence>
<proteinExistence type="inferred from homology"/>
<protein>
    <recommendedName>
        <fullName evidence="1">Galactose-6-phosphate isomerase subunit LacA</fullName>
        <ecNumber evidence="1">5.3.1.26</ecNumber>
    </recommendedName>
</protein>
<sequence>MAIIIGSDEAGKRLKEVIKSYLLDNKYDVVDVTEGQEVDFVDATLAVAKDVQSQEGNLGIVIDAFGAGSFMVATKIKGMIAAEVSDERSGYMTRGHNNSRMITMGSEIVGDTLAKNVVKGFVEGKYDGGRHQIRVDMLNKMC</sequence>
<comment type="catalytic activity">
    <reaction evidence="1">
        <text>aldehydo-D-galactose 6-phosphate = keto-D-tagatose 6-phosphate</text>
        <dbReference type="Rhea" id="RHEA:13033"/>
        <dbReference type="ChEBI" id="CHEBI:58255"/>
        <dbReference type="ChEBI" id="CHEBI:134283"/>
        <dbReference type="EC" id="5.3.1.26"/>
    </reaction>
</comment>
<comment type="pathway">
    <text evidence="1">Carbohydrate metabolism; D-galactose 6-phosphate degradation; D-tagatose 6-phosphate from D-galactose 6-phosphate: step 1/1.</text>
</comment>
<comment type="subunit">
    <text evidence="1">Heteromultimeric protein consisting of LacA and LacB.</text>
</comment>
<comment type="similarity">
    <text evidence="1">Belongs to the LacAB/RpiB family.</text>
</comment>
<accession>Q6G7B9</accession>
<gene>
    <name evidence="1" type="primary">lacA</name>
    <name type="ordered locus">SAS2096</name>
</gene>
<organism>
    <name type="scientific">Staphylococcus aureus (strain MSSA476)</name>
    <dbReference type="NCBI Taxonomy" id="282459"/>
    <lineage>
        <taxon>Bacteria</taxon>
        <taxon>Bacillati</taxon>
        <taxon>Bacillota</taxon>
        <taxon>Bacilli</taxon>
        <taxon>Bacillales</taxon>
        <taxon>Staphylococcaceae</taxon>
        <taxon>Staphylococcus</taxon>
    </lineage>
</organism>
<dbReference type="EC" id="5.3.1.26" evidence="1"/>
<dbReference type="EMBL" id="BX571857">
    <property type="protein sequence ID" value="CAG43904.1"/>
    <property type="molecule type" value="Genomic_DNA"/>
</dbReference>
<dbReference type="RefSeq" id="WP_000974608.1">
    <property type="nucleotide sequence ID" value="NC_002953.3"/>
</dbReference>
<dbReference type="SMR" id="Q6G7B9"/>
<dbReference type="GeneID" id="98347039"/>
<dbReference type="KEGG" id="sas:SAS2096"/>
<dbReference type="HOGENOM" id="CLU_091396_4_2_9"/>
<dbReference type="UniPathway" id="UPA00702">
    <property type="reaction ID" value="UER00714"/>
</dbReference>
<dbReference type="GO" id="GO:0050044">
    <property type="term" value="F:galactose-6-phosphate isomerase activity"/>
    <property type="evidence" value="ECO:0007669"/>
    <property type="project" value="UniProtKB-UniRule"/>
</dbReference>
<dbReference type="GO" id="GO:0004751">
    <property type="term" value="F:ribose-5-phosphate isomerase activity"/>
    <property type="evidence" value="ECO:0007669"/>
    <property type="project" value="TreeGrafter"/>
</dbReference>
<dbReference type="GO" id="GO:0019316">
    <property type="term" value="P:D-allose catabolic process"/>
    <property type="evidence" value="ECO:0007669"/>
    <property type="project" value="TreeGrafter"/>
</dbReference>
<dbReference type="GO" id="GO:0019388">
    <property type="term" value="P:galactose catabolic process"/>
    <property type="evidence" value="ECO:0007669"/>
    <property type="project" value="UniProtKB-UniPathway"/>
</dbReference>
<dbReference type="GO" id="GO:0019512">
    <property type="term" value="P:lactose catabolic process via tagatose-6-phosphate"/>
    <property type="evidence" value="ECO:0007669"/>
    <property type="project" value="UniProtKB-UniRule"/>
</dbReference>
<dbReference type="GO" id="GO:0009052">
    <property type="term" value="P:pentose-phosphate shunt, non-oxidative branch"/>
    <property type="evidence" value="ECO:0007669"/>
    <property type="project" value="TreeGrafter"/>
</dbReference>
<dbReference type="Gene3D" id="3.40.1400.10">
    <property type="entry name" value="Sugar-phosphate isomerase, RpiB/LacA/LacB"/>
    <property type="match status" value="1"/>
</dbReference>
<dbReference type="HAMAP" id="MF_01555">
    <property type="entry name" value="LacA"/>
    <property type="match status" value="1"/>
</dbReference>
<dbReference type="InterPro" id="IPR004783">
    <property type="entry name" value="LacA"/>
</dbReference>
<dbReference type="InterPro" id="IPR003500">
    <property type="entry name" value="RpiB_LacA_LacB"/>
</dbReference>
<dbReference type="InterPro" id="IPR036569">
    <property type="entry name" value="RpiB_LacA_LacB_sf"/>
</dbReference>
<dbReference type="NCBIfam" id="TIGR01118">
    <property type="entry name" value="lacA"/>
    <property type="match status" value="1"/>
</dbReference>
<dbReference type="NCBIfam" id="NF006380">
    <property type="entry name" value="PRK08621.1"/>
    <property type="match status" value="1"/>
</dbReference>
<dbReference type="NCBIfam" id="TIGR00689">
    <property type="entry name" value="rpiB_lacA_lacB"/>
    <property type="match status" value="1"/>
</dbReference>
<dbReference type="PANTHER" id="PTHR30345:SF5">
    <property type="entry name" value="GALACTOSE-6-PHOSPHATE ISOMERASE SUBUNIT LACA"/>
    <property type="match status" value="1"/>
</dbReference>
<dbReference type="PANTHER" id="PTHR30345">
    <property type="entry name" value="RIBOSE-5-PHOSPHATE ISOMERASE B"/>
    <property type="match status" value="1"/>
</dbReference>
<dbReference type="Pfam" id="PF02502">
    <property type="entry name" value="LacAB_rpiB"/>
    <property type="match status" value="1"/>
</dbReference>
<dbReference type="PIRSF" id="PIRSF005384">
    <property type="entry name" value="RpiB_LacA_B"/>
    <property type="match status" value="1"/>
</dbReference>
<dbReference type="SUPFAM" id="SSF89623">
    <property type="entry name" value="Ribose/Galactose isomerase RpiB/AlsB"/>
    <property type="match status" value="1"/>
</dbReference>
<reference key="1">
    <citation type="journal article" date="2004" name="Proc. Natl. Acad. Sci. U.S.A.">
        <title>Complete genomes of two clinical Staphylococcus aureus strains: evidence for the rapid evolution of virulence and drug resistance.</title>
        <authorList>
            <person name="Holden M.T.G."/>
            <person name="Feil E.J."/>
            <person name="Lindsay J.A."/>
            <person name="Peacock S.J."/>
            <person name="Day N.P.J."/>
            <person name="Enright M.C."/>
            <person name="Foster T.J."/>
            <person name="Moore C.E."/>
            <person name="Hurst L."/>
            <person name="Atkin R."/>
            <person name="Barron A."/>
            <person name="Bason N."/>
            <person name="Bentley S.D."/>
            <person name="Chillingworth C."/>
            <person name="Chillingworth T."/>
            <person name="Churcher C."/>
            <person name="Clark L."/>
            <person name="Corton C."/>
            <person name="Cronin A."/>
            <person name="Doggett J."/>
            <person name="Dowd L."/>
            <person name="Feltwell T."/>
            <person name="Hance Z."/>
            <person name="Harris B."/>
            <person name="Hauser H."/>
            <person name="Holroyd S."/>
            <person name="Jagels K."/>
            <person name="James K.D."/>
            <person name="Lennard N."/>
            <person name="Line A."/>
            <person name="Mayes R."/>
            <person name="Moule S."/>
            <person name="Mungall K."/>
            <person name="Ormond D."/>
            <person name="Quail M.A."/>
            <person name="Rabbinowitsch E."/>
            <person name="Rutherford K.M."/>
            <person name="Sanders M."/>
            <person name="Sharp S."/>
            <person name="Simmonds M."/>
            <person name="Stevens K."/>
            <person name="Whitehead S."/>
            <person name="Barrell B.G."/>
            <person name="Spratt B.G."/>
            <person name="Parkhill J."/>
        </authorList>
    </citation>
    <scope>NUCLEOTIDE SEQUENCE [LARGE SCALE GENOMIC DNA]</scope>
    <source>
        <strain>MSSA476</strain>
    </source>
</reference>
<feature type="chain" id="PRO_0000208108" description="Galactose-6-phosphate isomerase subunit LacA">
    <location>
        <begin position="1"/>
        <end position="142"/>
    </location>
</feature>